<feature type="initiator methionine" description="Removed" evidence="12">
    <location>
        <position position="1"/>
    </location>
</feature>
<feature type="chain" id="PRO_0000160906" description="Quinone oxidoreductase">
    <location>
        <begin position="2"/>
        <end position="329"/>
    </location>
</feature>
<feature type="binding site" evidence="5">
    <location>
        <position position="53"/>
    </location>
    <ligand>
        <name>NADP(+)</name>
        <dbReference type="ChEBI" id="CHEBI:58349"/>
    </ligand>
</feature>
<feature type="binding site" evidence="5">
    <location>
        <begin position="158"/>
        <end position="161"/>
    </location>
    <ligand>
        <name>NADP(+)</name>
        <dbReference type="ChEBI" id="CHEBI:58349"/>
    </ligand>
</feature>
<feature type="binding site" evidence="5">
    <location>
        <position position="181"/>
    </location>
    <ligand>
        <name>NADP(+)</name>
        <dbReference type="ChEBI" id="CHEBI:58349"/>
    </ligand>
</feature>
<feature type="binding site" evidence="5">
    <location>
        <position position="200"/>
    </location>
    <ligand>
        <name>NADP(+)</name>
        <dbReference type="ChEBI" id="CHEBI:58349"/>
    </ligand>
</feature>
<feature type="binding site" evidence="5">
    <location>
        <position position="229"/>
    </location>
    <ligand>
        <name>NADP(+)</name>
        <dbReference type="ChEBI" id="CHEBI:58349"/>
    </ligand>
</feature>
<feature type="binding site" evidence="5">
    <location>
        <begin position="246"/>
        <end position="249"/>
    </location>
    <ligand>
        <name>NADP(+)</name>
        <dbReference type="ChEBI" id="CHEBI:58349"/>
    </ligand>
</feature>
<feature type="binding site" evidence="5">
    <location>
        <begin position="269"/>
        <end position="271"/>
    </location>
    <ligand>
        <name>NADP(+)</name>
        <dbReference type="ChEBI" id="CHEBI:58349"/>
    </ligand>
</feature>
<feature type="modified residue" description="N-acetylalanine" evidence="12">
    <location>
        <position position="2"/>
    </location>
</feature>
<feature type="modified residue" description="N6-acetyllysine" evidence="10">
    <location>
        <position position="23"/>
    </location>
</feature>
<feature type="modified residue" description="Phosphoserine" evidence="11">
    <location>
        <position position="248"/>
    </location>
</feature>
<feature type="modified residue" description="N6-succinyllysine" evidence="1">
    <location>
        <position position="296"/>
    </location>
</feature>
<feature type="splice variant" id="VSP_042927" description="In isoform 2." evidence="8">
    <original>MATGQ</original>
    <variation>MHLLS</variation>
    <location>
        <begin position="1"/>
        <end position="5"/>
    </location>
</feature>
<feature type="splice variant" id="VSP_042928" description="In isoform 2." evidence="8">
    <location>
        <begin position="6"/>
        <end position="142"/>
    </location>
</feature>
<feature type="splice variant" id="VSP_046425" description="In isoform 3." evidence="7">
    <location>
        <begin position="211"/>
        <end position="244"/>
    </location>
</feature>
<feature type="sequence variant" id="VAR_022913" description="In dbSNP:rs11551729." evidence="2">
    <original>P</original>
    <variation>S</variation>
    <location>
        <position position="66"/>
    </location>
</feature>
<feature type="sequence variant" id="VAR_022914" description="In dbSNP:rs3819946." evidence="6">
    <original>I</original>
    <variation>V</variation>
    <location>
        <position position="176"/>
    </location>
</feature>
<feature type="sequence variant" id="VAR_048200" description="In dbSNP:rs17095822.">
    <original>E</original>
    <variation>K</variation>
    <location>
        <position position="183"/>
    </location>
</feature>
<feature type="sequence conflict" description="In Ref. 3; AK314813." evidence="9" ref="3">
    <original>E</original>
    <variation>G</variation>
    <location>
        <position position="105"/>
    </location>
</feature>
<feature type="strand" evidence="13">
    <location>
        <begin position="7"/>
        <end position="15"/>
    </location>
</feature>
<feature type="helix" evidence="13">
    <location>
        <begin position="19"/>
        <end position="21"/>
    </location>
</feature>
<feature type="strand" evidence="13">
    <location>
        <begin position="22"/>
        <end position="29"/>
    </location>
</feature>
<feature type="strand" evidence="13">
    <location>
        <begin position="37"/>
        <end position="46"/>
    </location>
</feature>
<feature type="helix" evidence="13">
    <location>
        <begin position="49"/>
        <end position="55"/>
    </location>
</feature>
<feature type="strand" evidence="13">
    <location>
        <begin position="65"/>
        <end position="67"/>
    </location>
</feature>
<feature type="strand" evidence="13">
    <location>
        <begin position="73"/>
        <end position="80"/>
    </location>
</feature>
<feature type="strand" evidence="13">
    <location>
        <begin position="92"/>
        <end position="96"/>
    </location>
</feature>
<feature type="strand" evidence="13">
    <location>
        <begin position="102"/>
        <end position="110"/>
    </location>
</feature>
<feature type="helix" evidence="13">
    <location>
        <begin position="111"/>
        <end position="113"/>
    </location>
</feature>
<feature type="strand" evidence="13">
    <location>
        <begin position="114"/>
        <end position="116"/>
    </location>
</feature>
<feature type="helix" evidence="13">
    <location>
        <begin position="123"/>
        <end position="126"/>
    </location>
</feature>
<feature type="turn" evidence="13">
    <location>
        <begin position="127"/>
        <end position="129"/>
    </location>
</feature>
<feature type="helix" evidence="13">
    <location>
        <begin position="130"/>
        <end position="141"/>
    </location>
</feature>
<feature type="strand" evidence="13">
    <location>
        <begin position="151"/>
        <end position="156"/>
    </location>
</feature>
<feature type="helix" evidence="13">
    <location>
        <begin position="160"/>
        <end position="171"/>
    </location>
</feature>
<feature type="strand" evidence="13">
    <location>
        <begin position="175"/>
        <end position="182"/>
    </location>
</feature>
<feature type="helix" evidence="13">
    <location>
        <begin position="183"/>
        <end position="191"/>
    </location>
</feature>
<feature type="strand" evidence="13">
    <location>
        <begin position="195"/>
        <end position="199"/>
    </location>
</feature>
<feature type="helix" evidence="13">
    <location>
        <begin position="205"/>
        <end position="213"/>
    </location>
</feature>
<feature type="strand" evidence="13">
    <location>
        <begin position="218"/>
        <end position="224"/>
    </location>
</feature>
<feature type="helix" evidence="13">
    <location>
        <begin position="226"/>
        <end position="236"/>
    </location>
</feature>
<feature type="strand" evidence="13">
    <location>
        <begin position="237"/>
        <end position="245"/>
    </location>
</feature>
<feature type="strand" evidence="13">
    <location>
        <begin position="252"/>
        <end position="254"/>
    </location>
</feature>
<feature type="helix" evidence="13">
    <location>
        <begin position="257"/>
        <end position="260"/>
    </location>
</feature>
<feature type="turn" evidence="13">
    <location>
        <begin position="261"/>
        <end position="263"/>
    </location>
</feature>
<feature type="strand" evidence="13">
    <location>
        <begin position="265"/>
        <end position="268"/>
    </location>
</feature>
<feature type="helix" evidence="13">
    <location>
        <begin position="271"/>
        <end position="273"/>
    </location>
</feature>
<feature type="helix" evidence="13">
    <location>
        <begin position="276"/>
        <end position="292"/>
    </location>
</feature>
<feature type="strand" evidence="13">
    <location>
        <begin position="299"/>
        <end position="304"/>
    </location>
</feature>
<feature type="helix" evidence="13">
    <location>
        <begin position="305"/>
        <end position="307"/>
    </location>
</feature>
<feature type="helix" evidence="13">
    <location>
        <begin position="308"/>
        <end position="317"/>
    </location>
</feature>
<feature type="strand" evidence="13">
    <location>
        <begin position="322"/>
        <end position="328"/>
    </location>
</feature>
<sequence>MATGQKLMRAVRVFEFGGPEVLKLRSDIAVPIPKDHQVLIKVHACGVNPVETYIRSGTYSRKPLLPYTPGSDVAGVIEAVGDNASAFKKGDRVFTSSTISGGYAEYALAADHTVYKLPEKLDFKQGAAIGIPYFTAYRALIHSACVKAGESVLVHGASGGVGLAACQIARAYGLKILGTAGTEEGQKIVLQNGAHEVFNHREVNYIDKIKKYVGEKGIDIIIEMLANVNLSKDLSLLSHGGRVIVVGSRGTIEINPRDTMAKESSIIGVTLFSSTKEEFQQYAAALQAGMEIGWLKPVIGSQYPLEKVAEAHENIIHGSGATGKMILLL</sequence>
<organism>
    <name type="scientific">Homo sapiens</name>
    <name type="common">Human</name>
    <dbReference type="NCBI Taxonomy" id="9606"/>
    <lineage>
        <taxon>Eukaryota</taxon>
        <taxon>Metazoa</taxon>
        <taxon>Chordata</taxon>
        <taxon>Craniata</taxon>
        <taxon>Vertebrata</taxon>
        <taxon>Euteleostomi</taxon>
        <taxon>Mammalia</taxon>
        <taxon>Eutheria</taxon>
        <taxon>Euarchontoglires</taxon>
        <taxon>Primates</taxon>
        <taxon>Haplorrhini</taxon>
        <taxon>Catarrhini</taxon>
        <taxon>Hominidae</taxon>
        <taxon>Homo</taxon>
    </lineage>
</organism>
<evidence type="ECO:0000250" key="1">
    <source>
        <dbReference type="UniProtKB" id="P47199"/>
    </source>
</evidence>
<evidence type="ECO:0000269" key="2">
    <source>
    </source>
</evidence>
<evidence type="ECO:0000269" key="3">
    <source>
    </source>
</evidence>
<evidence type="ECO:0000269" key="4">
    <source>
    </source>
</evidence>
<evidence type="ECO:0000269" key="5">
    <source ref="17"/>
</evidence>
<evidence type="ECO:0000269" key="6">
    <source ref="4"/>
</evidence>
<evidence type="ECO:0000303" key="7">
    <source>
    </source>
</evidence>
<evidence type="ECO:0000303" key="8">
    <source>
    </source>
</evidence>
<evidence type="ECO:0000305" key="9"/>
<evidence type="ECO:0007744" key="10">
    <source>
    </source>
</evidence>
<evidence type="ECO:0007744" key="11">
    <source>
    </source>
</evidence>
<evidence type="ECO:0007744" key="12">
    <source>
    </source>
</evidence>
<evidence type="ECO:0007829" key="13">
    <source>
        <dbReference type="PDB" id="1YB5"/>
    </source>
</evidence>
<proteinExistence type="evidence at protein level"/>
<name>QOR_HUMAN</name>
<dbReference type="EC" id="1.6.5.5"/>
<dbReference type="EMBL" id="L13278">
    <property type="protein sequence ID" value="AAA36536.1"/>
    <property type="molecule type" value="mRNA"/>
</dbReference>
<dbReference type="EMBL" id="L31526">
    <property type="protein sequence ID" value="AAK40311.1"/>
    <property type="molecule type" value="Genomic_DNA"/>
</dbReference>
<dbReference type="EMBL" id="L31521">
    <property type="protein sequence ID" value="AAK40311.1"/>
    <property type="status" value="JOINED"/>
    <property type="molecule type" value="Genomic_DNA"/>
</dbReference>
<dbReference type="EMBL" id="L31522">
    <property type="protein sequence ID" value="AAK40311.1"/>
    <property type="status" value="JOINED"/>
    <property type="molecule type" value="Genomic_DNA"/>
</dbReference>
<dbReference type="EMBL" id="L31523">
    <property type="protein sequence ID" value="AAK40311.1"/>
    <property type="status" value="JOINED"/>
    <property type="molecule type" value="Genomic_DNA"/>
</dbReference>
<dbReference type="EMBL" id="L31524">
    <property type="protein sequence ID" value="AAK40311.1"/>
    <property type="status" value="JOINED"/>
    <property type="molecule type" value="Genomic_DNA"/>
</dbReference>
<dbReference type="EMBL" id="L31525">
    <property type="protein sequence ID" value="AAK40311.1"/>
    <property type="status" value="JOINED"/>
    <property type="molecule type" value="Genomic_DNA"/>
</dbReference>
<dbReference type="EMBL" id="AB209714">
    <property type="protein sequence ID" value="BAD92951.1"/>
    <property type="molecule type" value="mRNA"/>
</dbReference>
<dbReference type="EMBL" id="AK223150">
    <property type="protein sequence ID" value="BAD96870.1"/>
    <property type="molecule type" value="mRNA"/>
</dbReference>
<dbReference type="EMBL" id="AK223201">
    <property type="protein sequence ID" value="BAD96921.1"/>
    <property type="molecule type" value="mRNA"/>
</dbReference>
<dbReference type="EMBL" id="BX647883">
    <property type="protein sequence ID" value="CAI46072.1"/>
    <property type="molecule type" value="mRNA"/>
</dbReference>
<dbReference type="EMBL" id="AK314813">
    <property type="status" value="NOT_ANNOTATED_CDS"/>
    <property type="molecule type" value="mRNA"/>
</dbReference>
<dbReference type="EMBL" id="AC091611">
    <property type="status" value="NOT_ANNOTATED_CDS"/>
    <property type="molecule type" value="Genomic_DNA"/>
</dbReference>
<dbReference type="EMBL" id="AC135803">
    <property type="status" value="NOT_ANNOTATED_CDS"/>
    <property type="molecule type" value="Genomic_DNA"/>
</dbReference>
<dbReference type="EMBL" id="CH471059">
    <property type="protein sequence ID" value="EAX06409.1"/>
    <property type="molecule type" value="Genomic_DNA"/>
</dbReference>
<dbReference type="EMBL" id="CH471059">
    <property type="protein sequence ID" value="EAX06410.1"/>
    <property type="molecule type" value="Genomic_DNA"/>
</dbReference>
<dbReference type="EMBL" id="CH471059">
    <property type="protein sequence ID" value="EAX06411.1"/>
    <property type="molecule type" value="Genomic_DNA"/>
</dbReference>
<dbReference type="EMBL" id="CH471059">
    <property type="protein sequence ID" value="EAX06412.1"/>
    <property type="molecule type" value="Genomic_DNA"/>
</dbReference>
<dbReference type="EMBL" id="BC039578">
    <property type="protein sequence ID" value="AAH39578.1"/>
    <property type="molecule type" value="mRNA"/>
</dbReference>
<dbReference type="EMBL" id="BC070058">
    <property type="protein sequence ID" value="AAH70058.1"/>
    <property type="molecule type" value="mRNA"/>
</dbReference>
<dbReference type="CCDS" id="CCDS44162.1">
    <molecule id="Q08257-3"/>
</dbReference>
<dbReference type="CCDS" id="CCDS44163.1">
    <molecule id="Q08257-2"/>
</dbReference>
<dbReference type="CCDS" id="CCDS665.1">
    <molecule id="Q08257-1"/>
</dbReference>
<dbReference type="PIR" id="PN0448">
    <property type="entry name" value="PN0448"/>
</dbReference>
<dbReference type="RefSeq" id="NP_001123514.1">
    <molecule id="Q08257-1"/>
    <property type="nucleotide sequence ID" value="NM_001130042.2"/>
</dbReference>
<dbReference type="RefSeq" id="NP_001123515.1">
    <molecule id="Q08257-3"/>
    <property type="nucleotide sequence ID" value="NM_001130043.2"/>
</dbReference>
<dbReference type="RefSeq" id="NP_001128231.1">
    <molecule id="Q08257-2"/>
    <property type="nucleotide sequence ID" value="NM_001134759.2"/>
</dbReference>
<dbReference type="RefSeq" id="NP_001880.2">
    <molecule id="Q08257-1"/>
    <property type="nucleotide sequence ID" value="NM_001889.3"/>
</dbReference>
<dbReference type="RefSeq" id="XP_005270548.1">
    <property type="nucleotide sequence ID" value="XM_005270491.4"/>
</dbReference>
<dbReference type="RefSeq" id="XP_011539049.1">
    <molecule id="Q08257-1"/>
    <property type="nucleotide sequence ID" value="XM_011540747.3"/>
</dbReference>
<dbReference type="RefSeq" id="XP_016855856.1">
    <molecule id="Q08257-3"/>
    <property type="nucleotide sequence ID" value="XM_017000367.3"/>
</dbReference>
<dbReference type="RefSeq" id="XP_016855857.1">
    <property type="nucleotide sequence ID" value="XM_017000368.1"/>
</dbReference>
<dbReference type="RefSeq" id="XP_047302707.1">
    <molecule id="Q08257-3"/>
    <property type="nucleotide sequence ID" value="XM_047446751.1"/>
</dbReference>
<dbReference type="PDB" id="1YB5">
    <property type="method" value="X-ray"/>
    <property type="resolution" value="1.85 A"/>
    <property type="chains" value="A/B=1-329"/>
</dbReference>
<dbReference type="PDBsum" id="1YB5"/>
<dbReference type="SMR" id="Q08257"/>
<dbReference type="BioGRID" id="107816">
    <property type="interactions" value="174"/>
</dbReference>
<dbReference type="FunCoup" id="Q08257">
    <property type="interactions" value="1094"/>
</dbReference>
<dbReference type="IntAct" id="Q08257">
    <property type="interactions" value="16"/>
</dbReference>
<dbReference type="STRING" id="9606.ENSP00000399805"/>
<dbReference type="BindingDB" id="Q08257"/>
<dbReference type="ChEMBL" id="CHEMBL6118"/>
<dbReference type="DrugBank" id="DB09061">
    <property type="generic name" value="Cannabidiol"/>
</dbReference>
<dbReference type="DrugBank" id="DB00266">
    <property type="generic name" value="Dicoumarol"/>
</dbReference>
<dbReference type="DrugBank" id="DB14009">
    <property type="generic name" value="Medical Cannabis"/>
</dbReference>
<dbReference type="DrugBank" id="DB14011">
    <property type="generic name" value="Nabiximols"/>
</dbReference>
<dbReference type="DrugBank" id="DB03461">
    <property type="generic name" value="Nicotinamide adenine dinucleotide phosphate"/>
</dbReference>
<dbReference type="GlyGen" id="Q08257">
    <property type="glycosylation" value="1 site, 1 O-linked glycan (1 site)"/>
</dbReference>
<dbReference type="iPTMnet" id="Q08257"/>
<dbReference type="PhosphoSitePlus" id="Q08257"/>
<dbReference type="SwissPalm" id="Q08257"/>
<dbReference type="BioMuta" id="CRYZ"/>
<dbReference type="DMDM" id="585013"/>
<dbReference type="REPRODUCTION-2DPAGE" id="IPI00000792"/>
<dbReference type="jPOST" id="Q08257"/>
<dbReference type="MassIVE" id="Q08257"/>
<dbReference type="PaxDb" id="9606-ENSP00000399805"/>
<dbReference type="PeptideAtlas" id="Q08257"/>
<dbReference type="ProteomicsDB" id="1584"/>
<dbReference type="ProteomicsDB" id="58584">
    <molecule id="Q08257-1"/>
</dbReference>
<dbReference type="ProteomicsDB" id="58585">
    <molecule id="Q08257-2"/>
</dbReference>
<dbReference type="Pumba" id="Q08257"/>
<dbReference type="Antibodypedia" id="19697">
    <property type="antibodies" value="112 antibodies from 21 providers"/>
</dbReference>
<dbReference type="DNASU" id="1429"/>
<dbReference type="Ensembl" id="ENST00000340866.10">
    <molecule id="Q08257-1"/>
    <property type="protein sequence ID" value="ENSP00000339399.5"/>
    <property type="gene ID" value="ENSG00000116791.14"/>
</dbReference>
<dbReference type="Ensembl" id="ENST00000370871.7">
    <molecule id="Q08257-3"/>
    <property type="protein sequence ID" value="ENSP00000359908.3"/>
    <property type="gene ID" value="ENSG00000116791.14"/>
</dbReference>
<dbReference type="Ensembl" id="ENST00000370872.7">
    <molecule id="Q08257-2"/>
    <property type="protein sequence ID" value="ENSP00000359909.3"/>
    <property type="gene ID" value="ENSG00000116791.14"/>
</dbReference>
<dbReference type="Ensembl" id="ENST00000417775.5">
    <molecule id="Q08257-1"/>
    <property type="protein sequence ID" value="ENSP00000399805.1"/>
    <property type="gene ID" value="ENSG00000116791.14"/>
</dbReference>
<dbReference type="GeneID" id="1429"/>
<dbReference type="KEGG" id="hsa:1429"/>
<dbReference type="MANE-Select" id="ENST00000340866.10">
    <property type="protein sequence ID" value="ENSP00000339399.5"/>
    <property type="RefSeq nucleotide sequence ID" value="NM_001889.4"/>
    <property type="RefSeq protein sequence ID" value="NP_001880.2"/>
</dbReference>
<dbReference type="UCSC" id="uc001dgj.4">
    <molecule id="Q08257-1"/>
    <property type="organism name" value="human"/>
</dbReference>
<dbReference type="AGR" id="HGNC:2419"/>
<dbReference type="CTD" id="1429"/>
<dbReference type="DisGeNET" id="1429"/>
<dbReference type="GeneCards" id="CRYZ"/>
<dbReference type="HGNC" id="HGNC:2419">
    <property type="gene designation" value="CRYZ"/>
</dbReference>
<dbReference type="HPA" id="ENSG00000116791">
    <property type="expression patterns" value="Tissue enhanced (kidney, liver)"/>
</dbReference>
<dbReference type="MIM" id="123691">
    <property type="type" value="gene"/>
</dbReference>
<dbReference type="neXtProt" id="NX_Q08257"/>
<dbReference type="OpenTargets" id="ENSG00000116791"/>
<dbReference type="PharmGKB" id="PA26925"/>
<dbReference type="VEuPathDB" id="HostDB:ENSG00000116791"/>
<dbReference type="eggNOG" id="KOG1198">
    <property type="taxonomic scope" value="Eukaryota"/>
</dbReference>
<dbReference type="GeneTree" id="ENSGT00940000154882"/>
<dbReference type="HOGENOM" id="CLU_026673_19_0_1"/>
<dbReference type="InParanoid" id="Q08257"/>
<dbReference type="OMA" id="KGMTAHY"/>
<dbReference type="OrthoDB" id="3941538at2759"/>
<dbReference type="PAN-GO" id="Q08257">
    <property type="GO annotations" value="4 GO annotations based on evolutionary models"/>
</dbReference>
<dbReference type="PhylomeDB" id="Q08257"/>
<dbReference type="TreeFam" id="TF314255"/>
<dbReference type="BRENDA" id="1.3.1.27">
    <property type="organism ID" value="2681"/>
</dbReference>
<dbReference type="BRENDA" id="1.6.5.5">
    <property type="organism ID" value="2681"/>
</dbReference>
<dbReference type="PathwayCommons" id="Q08257"/>
<dbReference type="SABIO-RK" id="Q08257"/>
<dbReference type="SignaLink" id="Q08257"/>
<dbReference type="BioGRID-ORCS" id="1429">
    <property type="hits" value="10 hits in 1159 CRISPR screens"/>
</dbReference>
<dbReference type="CD-CODE" id="FB4E32DD">
    <property type="entry name" value="Presynaptic clusters and postsynaptic densities"/>
</dbReference>
<dbReference type="ChiTaRS" id="CRYZ">
    <property type="organism name" value="human"/>
</dbReference>
<dbReference type="EvolutionaryTrace" id="Q08257"/>
<dbReference type="GeneWiki" id="CRYZ"/>
<dbReference type="GenomeRNAi" id="1429"/>
<dbReference type="Pharos" id="Q08257">
    <property type="development level" value="Tbio"/>
</dbReference>
<dbReference type="PRO" id="PR:Q08257"/>
<dbReference type="Proteomes" id="UP000005640">
    <property type="component" value="Chromosome 1"/>
</dbReference>
<dbReference type="RNAct" id="Q08257">
    <property type="molecule type" value="protein"/>
</dbReference>
<dbReference type="Bgee" id="ENSG00000116791">
    <property type="expression patterns" value="Expressed in secondary oocyte and 211 other cell types or tissues"/>
</dbReference>
<dbReference type="ExpressionAtlas" id="Q08257">
    <property type="expression patterns" value="baseline and differential"/>
</dbReference>
<dbReference type="GO" id="GO:0005829">
    <property type="term" value="C:cytosol"/>
    <property type="evidence" value="ECO:0000314"/>
    <property type="project" value="HPA"/>
</dbReference>
<dbReference type="GO" id="GO:0070062">
    <property type="term" value="C:extracellular exosome"/>
    <property type="evidence" value="ECO:0007005"/>
    <property type="project" value="UniProtKB"/>
</dbReference>
<dbReference type="GO" id="GO:0005739">
    <property type="term" value="C:mitochondrion"/>
    <property type="evidence" value="ECO:0006056"/>
    <property type="project" value="FlyBase"/>
</dbReference>
<dbReference type="GO" id="GO:0042802">
    <property type="term" value="F:identical protein binding"/>
    <property type="evidence" value="ECO:0000353"/>
    <property type="project" value="IntAct"/>
</dbReference>
<dbReference type="GO" id="GO:0003730">
    <property type="term" value="F:mRNA 3'-UTR binding"/>
    <property type="evidence" value="ECO:0000314"/>
    <property type="project" value="UniProtKB"/>
</dbReference>
<dbReference type="GO" id="GO:0070402">
    <property type="term" value="F:NADPH binding"/>
    <property type="evidence" value="ECO:0000314"/>
    <property type="project" value="UniProtKB"/>
</dbReference>
<dbReference type="GO" id="GO:0003960">
    <property type="term" value="F:NADPH:quinone reductase activity"/>
    <property type="evidence" value="ECO:0000314"/>
    <property type="project" value="UniProtKB"/>
</dbReference>
<dbReference type="GO" id="GO:0008270">
    <property type="term" value="F:zinc ion binding"/>
    <property type="evidence" value="ECO:0007669"/>
    <property type="project" value="InterPro"/>
</dbReference>
<dbReference type="GO" id="GO:0051289">
    <property type="term" value="P:protein homotetramerization"/>
    <property type="evidence" value="ECO:0000353"/>
    <property type="project" value="UniProtKB"/>
</dbReference>
<dbReference type="GO" id="GO:0007601">
    <property type="term" value="P:visual perception"/>
    <property type="evidence" value="ECO:0000304"/>
    <property type="project" value="ProtInc"/>
</dbReference>
<dbReference type="GO" id="GO:0042178">
    <property type="term" value="P:xenobiotic catabolic process"/>
    <property type="evidence" value="ECO:0000314"/>
    <property type="project" value="UniProtKB"/>
</dbReference>
<dbReference type="CDD" id="cd08253">
    <property type="entry name" value="zeta_crystallin"/>
    <property type="match status" value="1"/>
</dbReference>
<dbReference type="FunFam" id="3.90.180.10:FF:000072">
    <property type="entry name" value="Crystallin zeta"/>
    <property type="match status" value="1"/>
</dbReference>
<dbReference type="FunFam" id="3.90.180.10:FF:000016">
    <property type="entry name" value="Quinone oxidoreductase"/>
    <property type="match status" value="1"/>
</dbReference>
<dbReference type="FunFam" id="3.40.50.720:FF:000244">
    <property type="entry name" value="quinone oxidoreductase"/>
    <property type="match status" value="1"/>
</dbReference>
<dbReference type="Gene3D" id="3.90.180.10">
    <property type="entry name" value="Medium-chain alcohol dehydrogenases, catalytic domain"/>
    <property type="match status" value="1"/>
</dbReference>
<dbReference type="Gene3D" id="3.40.50.720">
    <property type="entry name" value="NAD(P)-binding Rossmann-like Domain"/>
    <property type="match status" value="1"/>
</dbReference>
<dbReference type="InterPro" id="IPR013149">
    <property type="entry name" value="ADH-like_C"/>
</dbReference>
<dbReference type="InterPro" id="IPR013154">
    <property type="entry name" value="ADH-like_N"/>
</dbReference>
<dbReference type="InterPro" id="IPR011032">
    <property type="entry name" value="GroES-like_sf"/>
</dbReference>
<dbReference type="InterPro" id="IPR036291">
    <property type="entry name" value="NAD(P)-bd_dom_sf"/>
</dbReference>
<dbReference type="InterPro" id="IPR020843">
    <property type="entry name" value="PKS_ER"/>
</dbReference>
<dbReference type="InterPro" id="IPR002364">
    <property type="entry name" value="Quin_OxRdtase/zeta-crystal_CS"/>
</dbReference>
<dbReference type="InterPro" id="IPR051603">
    <property type="entry name" value="Zinc-ADH_QOR/CCCR"/>
</dbReference>
<dbReference type="PANTHER" id="PTHR44154">
    <property type="entry name" value="QUINONE OXIDOREDUCTASE"/>
    <property type="match status" value="1"/>
</dbReference>
<dbReference type="PANTHER" id="PTHR44154:SF1">
    <property type="entry name" value="QUINONE OXIDOREDUCTASE"/>
    <property type="match status" value="1"/>
</dbReference>
<dbReference type="Pfam" id="PF08240">
    <property type="entry name" value="ADH_N"/>
    <property type="match status" value="1"/>
</dbReference>
<dbReference type="Pfam" id="PF00107">
    <property type="entry name" value="ADH_zinc_N"/>
    <property type="match status" value="1"/>
</dbReference>
<dbReference type="SMART" id="SM00829">
    <property type="entry name" value="PKS_ER"/>
    <property type="match status" value="1"/>
</dbReference>
<dbReference type="SUPFAM" id="SSF50129">
    <property type="entry name" value="GroES-like"/>
    <property type="match status" value="1"/>
</dbReference>
<dbReference type="SUPFAM" id="SSF51735">
    <property type="entry name" value="NAD(P)-binding Rossmann-fold domains"/>
    <property type="match status" value="1"/>
</dbReference>
<dbReference type="PROSITE" id="PS01162">
    <property type="entry name" value="QOR_ZETA_CRYSTAL"/>
    <property type="match status" value="1"/>
</dbReference>
<protein>
    <recommendedName>
        <fullName>Quinone oxidoreductase</fullName>
        <ecNumber>1.6.5.5</ecNumber>
    </recommendedName>
    <alternativeName>
        <fullName>NADPH:quinone reductase</fullName>
    </alternativeName>
    <alternativeName>
        <fullName>Zeta-crystallin</fullName>
    </alternativeName>
</protein>
<accession>Q08257</accession>
<accession>A6NN60</accession>
<accession>D3DQ76</accession>
<accession>Q53FT0</accession>
<accession>Q59EU7</accession>
<accession>Q5HYE7</accession>
<accession>Q6NSK9</accession>
<keyword id="KW-0002">3D-structure</keyword>
<keyword id="KW-0007">Acetylation</keyword>
<keyword id="KW-0025">Alternative splicing</keyword>
<keyword id="KW-0963">Cytoplasm</keyword>
<keyword id="KW-0521">NADP</keyword>
<keyword id="KW-0560">Oxidoreductase</keyword>
<keyword id="KW-0597">Phosphoprotein</keyword>
<keyword id="KW-1267">Proteomics identification</keyword>
<keyword id="KW-1185">Reference proteome</keyword>
<keyword id="KW-0694">RNA-binding</keyword>
<comment type="function">
    <text evidence="3 4">Does not have alcohol dehydrogenase activity. Binds NADP and acts through a one-electron transfer process. Orthoquinones, such as 1,2-naphthoquinone or 9,10-phenanthrenequinone, are the best substrates (in vitro). May act in the detoxification of xenobiotics. Interacts with (AU)-rich elements (ARE) in the 3'-UTR of target mRNA species. Enhances the stability of mRNA coding for BCL2. NADPH binding interferes with mRNA binding.</text>
</comment>
<comment type="catalytic activity">
    <reaction evidence="3">
        <text>2 a quinone + NADPH + H(+) = 2 a 1,4-benzosemiquinone + NADP(+)</text>
        <dbReference type="Rhea" id="RHEA:14269"/>
        <dbReference type="ChEBI" id="CHEBI:15378"/>
        <dbReference type="ChEBI" id="CHEBI:57783"/>
        <dbReference type="ChEBI" id="CHEBI:58349"/>
        <dbReference type="ChEBI" id="CHEBI:132124"/>
        <dbReference type="ChEBI" id="CHEBI:134225"/>
        <dbReference type="EC" id="1.6.5.5"/>
    </reaction>
</comment>
<comment type="subunit">
    <text evidence="3 5">Homotetramer.</text>
</comment>
<comment type="interaction">
    <interactant intactId="EBI-1044627">
        <id>Q08257</id>
    </interactant>
    <interactant intactId="EBI-1044627">
        <id>Q08257</id>
        <label>CRYZ</label>
    </interactant>
    <organismsDiffer>false</organismsDiffer>
    <experiments>3</experiments>
</comment>
<comment type="subcellular location">
    <subcellularLocation>
        <location evidence="4">Cytoplasm</location>
    </subcellularLocation>
</comment>
<comment type="alternative products">
    <event type="alternative splicing"/>
    <isoform>
        <id>Q08257-1</id>
        <name>1</name>
        <sequence type="displayed"/>
    </isoform>
    <isoform>
        <id>Q08257-2</id>
        <name>2</name>
        <sequence type="described" ref="VSP_042927 VSP_042928"/>
    </isoform>
    <isoform>
        <id>Q08257-3</id>
        <name>3</name>
        <sequence type="described" ref="VSP_046425"/>
    </isoform>
</comment>
<comment type="tissue specificity">
    <text>Only very low amounts in the lens.</text>
</comment>
<comment type="similarity">
    <text evidence="9">Belongs to the zinc-containing alcohol dehydrogenase family. Quinone oxidoreductase subfamily.</text>
</comment>
<gene>
    <name type="primary">CRYZ</name>
</gene>
<reference key="1">
    <citation type="journal article" date="1993" name="Biochem. Biophys. Res. Commun.">
        <title>Molecular cloning and sequencing of zeta-crystallin/quinone reductase cDNA from human liver.</title>
        <authorList>
            <person name="Gonzalez P."/>
            <person name="Rao P.V."/>
            <person name="Zigler J.S. Jr."/>
        </authorList>
    </citation>
    <scope>NUCLEOTIDE SEQUENCE [MRNA] (ISOFORM 1)</scope>
    <source>
        <tissue>Liver</tissue>
    </source>
</reference>
<reference key="2">
    <citation type="journal article" date="1994" name="Genomics">
        <title>Organization of the human zeta-crystallin/quinone reductase gene (CRYZ).</title>
        <authorList>
            <person name="Gonzalez P."/>
            <person name="Rao P.V."/>
            <person name="Zigler J.S. Jr."/>
        </authorList>
    </citation>
    <scope>NUCLEOTIDE SEQUENCE [GENOMIC DNA]</scope>
    <source>
        <tissue>Liver</tissue>
    </source>
</reference>
<reference key="3">
    <citation type="journal article" date="2004" name="Nat. Genet.">
        <title>Complete sequencing and characterization of 21,243 full-length human cDNAs.</title>
        <authorList>
            <person name="Ota T."/>
            <person name="Suzuki Y."/>
            <person name="Nishikawa T."/>
            <person name="Otsuki T."/>
            <person name="Sugiyama T."/>
            <person name="Irie R."/>
            <person name="Wakamatsu A."/>
            <person name="Hayashi K."/>
            <person name="Sato H."/>
            <person name="Nagai K."/>
            <person name="Kimura K."/>
            <person name="Makita H."/>
            <person name="Sekine M."/>
            <person name="Obayashi M."/>
            <person name="Nishi T."/>
            <person name="Shibahara T."/>
            <person name="Tanaka T."/>
            <person name="Ishii S."/>
            <person name="Yamamoto J."/>
            <person name="Saito K."/>
            <person name="Kawai Y."/>
            <person name="Isono Y."/>
            <person name="Nakamura Y."/>
            <person name="Nagahari K."/>
            <person name="Murakami K."/>
            <person name="Yasuda T."/>
            <person name="Iwayanagi T."/>
            <person name="Wagatsuma M."/>
            <person name="Shiratori A."/>
            <person name="Sudo H."/>
            <person name="Hosoiri T."/>
            <person name="Kaku Y."/>
            <person name="Kodaira H."/>
            <person name="Kondo H."/>
            <person name="Sugawara M."/>
            <person name="Takahashi M."/>
            <person name="Kanda K."/>
            <person name="Yokoi T."/>
            <person name="Furuya T."/>
            <person name="Kikkawa E."/>
            <person name="Omura Y."/>
            <person name="Abe K."/>
            <person name="Kamihara K."/>
            <person name="Katsuta N."/>
            <person name="Sato K."/>
            <person name="Tanikawa M."/>
            <person name="Yamazaki M."/>
            <person name="Ninomiya K."/>
            <person name="Ishibashi T."/>
            <person name="Yamashita H."/>
            <person name="Murakawa K."/>
            <person name="Fujimori K."/>
            <person name="Tanai H."/>
            <person name="Kimata M."/>
            <person name="Watanabe M."/>
            <person name="Hiraoka S."/>
            <person name="Chiba Y."/>
            <person name="Ishida S."/>
            <person name="Ono Y."/>
            <person name="Takiguchi S."/>
            <person name="Watanabe S."/>
            <person name="Yosida M."/>
            <person name="Hotuta T."/>
            <person name="Kusano J."/>
            <person name="Kanehori K."/>
            <person name="Takahashi-Fujii A."/>
            <person name="Hara H."/>
            <person name="Tanase T.-O."/>
            <person name="Nomura Y."/>
            <person name="Togiya S."/>
            <person name="Komai F."/>
            <person name="Hara R."/>
            <person name="Takeuchi K."/>
            <person name="Arita M."/>
            <person name="Imose N."/>
            <person name="Musashino K."/>
            <person name="Yuuki H."/>
            <person name="Oshima A."/>
            <person name="Sasaki N."/>
            <person name="Aotsuka S."/>
            <person name="Yoshikawa Y."/>
            <person name="Matsunawa H."/>
            <person name="Ichihara T."/>
            <person name="Shiohata N."/>
            <person name="Sano S."/>
            <person name="Moriya S."/>
            <person name="Momiyama H."/>
            <person name="Satoh N."/>
            <person name="Takami S."/>
            <person name="Terashima Y."/>
            <person name="Suzuki O."/>
            <person name="Nakagawa S."/>
            <person name="Senoh A."/>
            <person name="Mizoguchi H."/>
            <person name="Goto Y."/>
            <person name="Shimizu F."/>
            <person name="Wakebe H."/>
            <person name="Hishigaki H."/>
            <person name="Watanabe T."/>
            <person name="Sugiyama A."/>
            <person name="Takemoto M."/>
            <person name="Kawakami B."/>
            <person name="Yamazaki M."/>
            <person name="Watanabe K."/>
            <person name="Kumagai A."/>
            <person name="Itakura S."/>
            <person name="Fukuzumi Y."/>
            <person name="Fujimori Y."/>
            <person name="Komiyama M."/>
            <person name="Tashiro H."/>
            <person name="Tanigami A."/>
            <person name="Fujiwara T."/>
            <person name="Ono T."/>
            <person name="Yamada K."/>
            <person name="Fujii Y."/>
            <person name="Ozaki K."/>
            <person name="Hirao M."/>
            <person name="Ohmori Y."/>
            <person name="Kawabata A."/>
            <person name="Hikiji T."/>
            <person name="Kobatake N."/>
            <person name="Inagaki H."/>
            <person name="Ikema Y."/>
            <person name="Okamoto S."/>
            <person name="Okitani R."/>
            <person name="Kawakami T."/>
            <person name="Noguchi S."/>
            <person name="Itoh T."/>
            <person name="Shigeta K."/>
            <person name="Senba T."/>
            <person name="Matsumura K."/>
            <person name="Nakajima Y."/>
            <person name="Mizuno T."/>
            <person name="Morinaga M."/>
            <person name="Sasaki M."/>
            <person name="Togashi T."/>
            <person name="Oyama M."/>
            <person name="Hata H."/>
            <person name="Watanabe M."/>
            <person name="Komatsu T."/>
            <person name="Mizushima-Sugano J."/>
            <person name="Satoh T."/>
            <person name="Shirai Y."/>
            <person name="Takahashi Y."/>
            <person name="Nakagawa K."/>
            <person name="Okumura K."/>
            <person name="Nagase T."/>
            <person name="Nomura N."/>
            <person name="Kikuchi H."/>
            <person name="Masuho Y."/>
            <person name="Yamashita R."/>
            <person name="Nakai K."/>
            <person name="Yada T."/>
            <person name="Nakamura Y."/>
            <person name="Ohara O."/>
            <person name="Isogai T."/>
            <person name="Sugano S."/>
        </authorList>
    </citation>
    <scope>NUCLEOTIDE SEQUENCE [LARGE SCALE MRNA] (ISOFORM 3)</scope>
    <source>
        <tissue>Thalamus</tissue>
    </source>
</reference>
<reference key="4">
    <citation type="submission" date="2005-04" db="EMBL/GenBank/DDBJ databases">
        <authorList>
            <person name="Suzuki Y."/>
            <person name="Sugano S."/>
            <person name="Totoki Y."/>
            <person name="Toyoda A."/>
            <person name="Takeda T."/>
            <person name="Sakaki Y."/>
            <person name="Tanaka A."/>
            <person name="Yokoyama S."/>
        </authorList>
    </citation>
    <scope>NUCLEOTIDE SEQUENCE [LARGE SCALE MRNA] (ISOFORM 1)</scope>
    <scope>VARIANT VAL-176</scope>
    <source>
        <tissue>Brain</tissue>
        <tissue>Kidney proximal tubule</tissue>
        <tissue>Lung</tissue>
    </source>
</reference>
<reference key="5">
    <citation type="journal article" date="2007" name="BMC Genomics">
        <title>The full-ORF clone resource of the German cDNA consortium.</title>
        <authorList>
            <person name="Bechtel S."/>
            <person name="Rosenfelder H."/>
            <person name="Duda A."/>
            <person name="Schmidt C.P."/>
            <person name="Ernst U."/>
            <person name="Wellenreuther R."/>
            <person name="Mehrle A."/>
            <person name="Schuster C."/>
            <person name="Bahr A."/>
            <person name="Bloecker H."/>
            <person name="Heubner D."/>
            <person name="Hoerlein A."/>
            <person name="Michel G."/>
            <person name="Wedler H."/>
            <person name="Koehrer K."/>
            <person name="Ottenwaelder B."/>
            <person name="Poustka A."/>
            <person name="Wiemann S."/>
            <person name="Schupp I."/>
        </authorList>
    </citation>
    <scope>NUCLEOTIDE SEQUENCE [LARGE SCALE MRNA] (ISOFORM 2)</scope>
    <source>
        <tissue>Fetal kidney</tissue>
    </source>
</reference>
<reference key="6">
    <citation type="journal article" date="2006" name="Nature">
        <title>The DNA sequence and biological annotation of human chromosome 1.</title>
        <authorList>
            <person name="Gregory S.G."/>
            <person name="Barlow K.F."/>
            <person name="McLay K.E."/>
            <person name="Kaul R."/>
            <person name="Swarbreck D."/>
            <person name="Dunham A."/>
            <person name="Scott C.E."/>
            <person name="Howe K.L."/>
            <person name="Woodfine K."/>
            <person name="Spencer C.C.A."/>
            <person name="Jones M.C."/>
            <person name="Gillson C."/>
            <person name="Searle S."/>
            <person name="Zhou Y."/>
            <person name="Kokocinski F."/>
            <person name="McDonald L."/>
            <person name="Evans R."/>
            <person name="Phillips K."/>
            <person name="Atkinson A."/>
            <person name="Cooper R."/>
            <person name="Jones C."/>
            <person name="Hall R.E."/>
            <person name="Andrews T.D."/>
            <person name="Lloyd C."/>
            <person name="Ainscough R."/>
            <person name="Almeida J.P."/>
            <person name="Ambrose K.D."/>
            <person name="Anderson F."/>
            <person name="Andrew R.W."/>
            <person name="Ashwell R.I.S."/>
            <person name="Aubin K."/>
            <person name="Babbage A.K."/>
            <person name="Bagguley C.L."/>
            <person name="Bailey J."/>
            <person name="Beasley H."/>
            <person name="Bethel G."/>
            <person name="Bird C.P."/>
            <person name="Bray-Allen S."/>
            <person name="Brown J.Y."/>
            <person name="Brown A.J."/>
            <person name="Buckley D."/>
            <person name="Burton J."/>
            <person name="Bye J."/>
            <person name="Carder C."/>
            <person name="Chapman J.C."/>
            <person name="Clark S.Y."/>
            <person name="Clarke G."/>
            <person name="Clee C."/>
            <person name="Cobley V."/>
            <person name="Collier R.E."/>
            <person name="Corby N."/>
            <person name="Coville G.J."/>
            <person name="Davies J."/>
            <person name="Deadman R."/>
            <person name="Dunn M."/>
            <person name="Earthrowl M."/>
            <person name="Ellington A.G."/>
            <person name="Errington H."/>
            <person name="Frankish A."/>
            <person name="Frankland J."/>
            <person name="French L."/>
            <person name="Garner P."/>
            <person name="Garnett J."/>
            <person name="Gay L."/>
            <person name="Ghori M.R.J."/>
            <person name="Gibson R."/>
            <person name="Gilby L.M."/>
            <person name="Gillett W."/>
            <person name="Glithero R.J."/>
            <person name="Grafham D.V."/>
            <person name="Griffiths C."/>
            <person name="Griffiths-Jones S."/>
            <person name="Grocock R."/>
            <person name="Hammond S."/>
            <person name="Harrison E.S.I."/>
            <person name="Hart E."/>
            <person name="Haugen E."/>
            <person name="Heath P.D."/>
            <person name="Holmes S."/>
            <person name="Holt K."/>
            <person name="Howden P.J."/>
            <person name="Hunt A.R."/>
            <person name="Hunt S.E."/>
            <person name="Hunter G."/>
            <person name="Isherwood J."/>
            <person name="James R."/>
            <person name="Johnson C."/>
            <person name="Johnson D."/>
            <person name="Joy A."/>
            <person name="Kay M."/>
            <person name="Kershaw J.K."/>
            <person name="Kibukawa M."/>
            <person name="Kimberley A.M."/>
            <person name="King A."/>
            <person name="Knights A.J."/>
            <person name="Lad H."/>
            <person name="Laird G."/>
            <person name="Lawlor S."/>
            <person name="Leongamornlert D.A."/>
            <person name="Lloyd D.M."/>
            <person name="Loveland J."/>
            <person name="Lovell J."/>
            <person name="Lush M.J."/>
            <person name="Lyne R."/>
            <person name="Martin S."/>
            <person name="Mashreghi-Mohammadi M."/>
            <person name="Matthews L."/>
            <person name="Matthews N.S.W."/>
            <person name="McLaren S."/>
            <person name="Milne S."/>
            <person name="Mistry S."/>
            <person name="Moore M.J.F."/>
            <person name="Nickerson T."/>
            <person name="O'Dell C.N."/>
            <person name="Oliver K."/>
            <person name="Palmeiri A."/>
            <person name="Palmer S.A."/>
            <person name="Parker A."/>
            <person name="Patel D."/>
            <person name="Pearce A.V."/>
            <person name="Peck A.I."/>
            <person name="Pelan S."/>
            <person name="Phelps K."/>
            <person name="Phillimore B.J."/>
            <person name="Plumb R."/>
            <person name="Rajan J."/>
            <person name="Raymond C."/>
            <person name="Rouse G."/>
            <person name="Saenphimmachak C."/>
            <person name="Sehra H.K."/>
            <person name="Sheridan E."/>
            <person name="Shownkeen R."/>
            <person name="Sims S."/>
            <person name="Skuce C.D."/>
            <person name="Smith M."/>
            <person name="Steward C."/>
            <person name="Subramanian S."/>
            <person name="Sycamore N."/>
            <person name="Tracey A."/>
            <person name="Tromans A."/>
            <person name="Van Helmond Z."/>
            <person name="Wall M."/>
            <person name="Wallis J.M."/>
            <person name="White S."/>
            <person name="Whitehead S.L."/>
            <person name="Wilkinson J.E."/>
            <person name="Willey D.L."/>
            <person name="Williams H."/>
            <person name="Wilming L."/>
            <person name="Wray P.W."/>
            <person name="Wu Z."/>
            <person name="Coulson A."/>
            <person name="Vaudin M."/>
            <person name="Sulston J.E."/>
            <person name="Durbin R.M."/>
            <person name="Hubbard T."/>
            <person name="Wooster R."/>
            <person name="Dunham I."/>
            <person name="Carter N.P."/>
            <person name="McVean G."/>
            <person name="Ross M.T."/>
            <person name="Harrow J."/>
            <person name="Olson M.V."/>
            <person name="Beck S."/>
            <person name="Rogers J."/>
            <person name="Bentley D.R."/>
        </authorList>
    </citation>
    <scope>NUCLEOTIDE SEQUENCE [LARGE SCALE GENOMIC DNA]</scope>
</reference>
<reference key="7">
    <citation type="submission" date="2005-09" db="EMBL/GenBank/DDBJ databases">
        <authorList>
            <person name="Mural R.J."/>
            <person name="Istrail S."/>
            <person name="Sutton G.G."/>
            <person name="Florea L."/>
            <person name="Halpern A.L."/>
            <person name="Mobarry C.M."/>
            <person name="Lippert R."/>
            <person name="Walenz B."/>
            <person name="Shatkay H."/>
            <person name="Dew I."/>
            <person name="Miller J.R."/>
            <person name="Flanigan M.J."/>
            <person name="Edwards N.J."/>
            <person name="Bolanos R."/>
            <person name="Fasulo D."/>
            <person name="Halldorsson B.V."/>
            <person name="Hannenhalli S."/>
            <person name="Turner R."/>
            <person name="Yooseph S."/>
            <person name="Lu F."/>
            <person name="Nusskern D.R."/>
            <person name="Shue B.C."/>
            <person name="Zheng X.H."/>
            <person name="Zhong F."/>
            <person name="Delcher A.L."/>
            <person name="Huson D.H."/>
            <person name="Kravitz S.A."/>
            <person name="Mouchard L."/>
            <person name="Reinert K."/>
            <person name="Remington K.A."/>
            <person name="Clark A.G."/>
            <person name="Waterman M.S."/>
            <person name="Eichler E.E."/>
            <person name="Adams M.D."/>
            <person name="Hunkapiller M.W."/>
            <person name="Myers E.W."/>
            <person name="Venter J.C."/>
        </authorList>
    </citation>
    <scope>NUCLEOTIDE SEQUENCE [LARGE SCALE GENOMIC DNA]</scope>
</reference>
<reference key="8">
    <citation type="journal article" date="2004" name="Genome Res.">
        <title>The status, quality, and expansion of the NIH full-length cDNA project: the Mammalian Gene Collection (MGC).</title>
        <authorList>
            <consortium name="The MGC Project Team"/>
        </authorList>
    </citation>
    <scope>NUCLEOTIDE SEQUENCE [LARGE SCALE MRNA] (ISOFORM 1)</scope>
    <scope>VARIANT SER-66</scope>
    <source>
        <tissue>Testis</tissue>
    </source>
</reference>
<reference key="9">
    <citation type="journal article" date="2007" name="Cell. Mol. Life Sci.">
        <title>Human and yeast zeta-crystallins bind AU-rich elements in RNA.</title>
        <authorList>
            <person name="Fernandez M.R."/>
            <person name="Porte S."/>
            <person name="Crosas E."/>
            <person name="Barbera N."/>
            <person name="Farres J."/>
            <person name="Biosca J.A."/>
            <person name="Pares X."/>
        </authorList>
    </citation>
    <scope>FUNCTION</scope>
    <scope>SUBUNIT</scope>
    <scope>CATALYTIC ACTIVITY</scope>
</reference>
<reference key="10">
    <citation type="journal article" date="2009" name="Science">
        <title>Lysine acetylation targets protein complexes and co-regulates major cellular functions.</title>
        <authorList>
            <person name="Choudhary C."/>
            <person name="Kumar C."/>
            <person name="Gnad F."/>
            <person name="Nielsen M.L."/>
            <person name="Rehman M."/>
            <person name="Walther T.C."/>
            <person name="Olsen J.V."/>
            <person name="Mann M."/>
        </authorList>
    </citation>
    <scope>ACETYLATION [LARGE SCALE ANALYSIS] AT LYS-23</scope>
    <scope>IDENTIFICATION BY MASS SPECTROMETRY [LARGE SCALE ANALYSIS]</scope>
</reference>
<reference key="11">
    <citation type="journal article" date="2010" name="FASEB J.">
        <title>{zeta}-Crystallin is a bcl-2 mRNA binding protein involved in bcl-2 overexpression in T-cell acute lymphocytic leukemia.</title>
        <authorList>
            <person name="Lapucci A."/>
            <person name="Lulli M."/>
            <person name="Amedei A."/>
            <person name="Papucci L."/>
            <person name="Witort E."/>
            <person name="Di Gesualdo F."/>
            <person name="Bertolini F."/>
            <person name="Brewer G."/>
            <person name="Nicolin A."/>
            <person name="Bevilacqua A."/>
            <person name="Schiavone N."/>
            <person name="Morello D."/>
            <person name="Donnini M."/>
            <person name="Capaccioli S."/>
        </authorList>
    </citation>
    <scope>FUNCTION</scope>
    <scope>SUBCELLULAR LOCATION</scope>
    <scope>IDENTIFICATION BY MASS SPECTROMETRY</scope>
</reference>
<reference key="12">
    <citation type="journal article" date="2011" name="BMC Syst. Biol.">
        <title>Initial characterization of the human central proteome.</title>
        <authorList>
            <person name="Burkard T.R."/>
            <person name="Planyavsky M."/>
            <person name="Kaupe I."/>
            <person name="Breitwieser F.P."/>
            <person name="Buerckstuemmer T."/>
            <person name="Bennett K.L."/>
            <person name="Superti-Furga G."/>
            <person name="Colinge J."/>
        </authorList>
    </citation>
    <scope>IDENTIFICATION BY MASS SPECTROMETRY [LARGE SCALE ANALYSIS]</scope>
</reference>
<reference key="13">
    <citation type="journal article" date="2011" name="Sci. Signal.">
        <title>System-wide temporal characterization of the proteome and phosphoproteome of human embryonic stem cell differentiation.</title>
        <authorList>
            <person name="Rigbolt K.T."/>
            <person name="Prokhorova T.A."/>
            <person name="Akimov V."/>
            <person name="Henningsen J."/>
            <person name="Johansen P.T."/>
            <person name="Kratchmarova I."/>
            <person name="Kassem M."/>
            <person name="Mann M."/>
            <person name="Olsen J.V."/>
            <person name="Blagoev B."/>
        </authorList>
    </citation>
    <scope>PHOSPHORYLATION [LARGE SCALE ANALYSIS] AT SER-248</scope>
    <scope>IDENTIFICATION BY MASS SPECTROMETRY [LARGE SCALE ANALYSIS]</scope>
</reference>
<reference key="14">
    <citation type="journal article" date="2012" name="Proc. Natl. Acad. Sci. U.S.A.">
        <title>N-terminal acetylome analyses and functional insights of the N-terminal acetyltransferase NatB.</title>
        <authorList>
            <person name="Van Damme P."/>
            <person name="Lasa M."/>
            <person name="Polevoda B."/>
            <person name="Gazquez C."/>
            <person name="Elosegui-Artola A."/>
            <person name="Kim D.S."/>
            <person name="De Juan-Pardo E."/>
            <person name="Demeyer K."/>
            <person name="Hole K."/>
            <person name="Larrea E."/>
            <person name="Timmerman E."/>
            <person name="Prieto J."/>
            <person name="Arnesen T."/>
            <person name="Sherman F."/>
            <person name="Gevaert K."/>
            <person name="Aldabe R."/>
        </authorList>
    </citation>
    <scope>ACETYLATION [LARGE SCALE ANALYSIS] AT ALA-2</scope>
    <scope>CLEAVAGE OF INITIATOR METHIONINE [LARGE SCALE ANALYSIS]</scope>
    <scope>IDENTIFICATION BY MASS SPECTROMETRY [LARGE SCALE ANALYSIS]</scope>
</reference>
<reference key="15">
    <citation type="journal article" date="2014" name="J. Proteomics">
        <title>An enzyme assisted RP-RPLC approach for in-depth analysis of human liver phosphoproteome.</title>
        <authorList>
            <person name="Bian Y."/>
            <person name="Song C."/>
            <person name="Cheng K."/>
            <person name="Dong M."/>
            <person name="Wang F."/>
            <person name="Huang J."/>
            <person name="Sun D."/>
            <person name="Wang L."/>
            <person name="Ye M."/>
            <person name="Zou H."/>
        </authorList>
    </citation>
    <scope>IDENTIFICATION BY MASS SPECTROMETRY [LARGE SCALE ANALYSIS]</scope>
    <source>
        <tissue>Liver</tissue>
    </source>
</reference>
<reference key="16">
    <citation type="journal article" date="2015" name="Proteomics">
        <title>N-terminome analysis of the human mitochondrial proteome.</title>
        <authorList>
            <person name="Vaca Jacome A.S."/>
            <person name="Rabilloud T."/>
            <person name="Schaeffer-Reiss C."/>
            <person name="Rompais M."/>
            <person name="Ayoub D."/>
            <person name="Lane L."/>
            <person name="Bairoch A."/>
            <person name="Van Dorsselaer A."/>
            <person name="Carapito C."/>
        </authorList>
    </citation>
    <scope>IDENTIFICATION BY MASS SPECTROMETRY [LARGE SCALE ANALYSIS]</scope>
</reference>
<reference key="17">
    <citation type="submission" date="2007-03" db="PDB data bank">
        <title>Crystal structure of human zeta-crystallin at 1.85 A.</title>
        <authorList>
            <consortium name="Structural genomics consortium (SGC)"/>
        </authorList>
    </citation>
    <scope>X-RAY CRYSTALLOGRAPHY (1.85 ANGSTROMS) IN COMPLEX WITH NADP</scope>
</reference>